<dbReference type="EMBL" id="CP001654">
    <property type="protein sequence ID" value="ACS85444.1"/>
    <property type="molecule type" value="Genomic_DNA"/>
</dbReference>
<dbReference type="RefSeq" id="WP_012765261.1">
    <property type="nucleotide sequence ID" value="NC_012880.1"/>
</dbReference>
<dbReference type="SMR" id="C6C3U9"/>
<dbReference type="STRING" id="579405.Dd703_1647"/>
<dbReference type="KEGG" id="dda:Dd703_1647"/>
<dbReference type="eggNOG" id="ENOG502Z8AH">
    <property type="taxonomic scope" value="Bacteria"/>
</dbReference>
<dbReference type="HOGENOM" id="CLU_128248_0_0_6"/>
<dbReference type="Proteomes" id="UP000002734">
    <property type="component" value="Chromosome"/>
</dbReference>
<dbReference type="GO" id="GO:0005737">
    <property type="term" value="C:cytoplasm"/>
    <property type="evidence" value="ECO:0007669"/>
    <property type="project" value="UniProtKB-SubCell"/>
</dbReference>
<dbReference type="GO" id="GO:0000917">
    <property type="term" value="P:division septum assembly"/>
    <property type="evidence" value="ECO:0007669"/>
    <property type="project" value="UniProtKB-KW"/>
</dbReference>
<dbReference type="GO" id="GO:0043093">
    <property type="term" value="P:FtsZ-dependent cytokinesis"/>
    <property type="evidence" value="ECO:0007669"/>
    <property type="project" value="UniProtKB-UniRule"/>
</dbReference>
<dbReference type="HAMAP" id="MF_00906">
    <property type="entry name" value="ZapC"/>
    <property type="match status" value="1"/>
</dbReference>
<dbReference type="InterPro" id="IPR009809">
    <property type="entry name" value="ZapC"/>
</dbReference>
<dbReference type="InterPro" id="IPR048372">
    <property type="entry name" value="ZapC_C"/>
</dbReference>
<dbReference type="InterPro" id="IPR048373">
    <property type="entry name" value="ZapC_N"/>
</dbReference>
<dbReference type="Pfam" id="PF07126">
    <property type="entry name" value="ZapC_C"/>
    <property type="match status" value="1"/>
</dbReference>
<dbReference type="Pfam" id="PF21083">
    <property type="entry name" value="ZapC_N"/>
    <property type="match status" value="1"/>
</dbReference>
<dbReference type="PIRSF" id="PIRSF010252">
    <property type="entry name" value="ZapC"/>
    <property type="match status" value="1"/>
</dbReference>
<feature type="chain" id="PRO_0000413776" description="Cell division protein ZapC">
    <location>
        <begin position="1"/>
        <end position="186"/>
    </location>
</feature>
<keyword id="KW-0131">Cell cycle</keyword>
<keyword id="KW-0132">Cell division</keyword>
<keyword id="KW-0963">Cytoplasm</keyword>
<keyword id="KW-0717">Septation</keyword>
<protein>
    <recommendedName>
        <fullName evidence="1">Cell division protein ZapC</fullName>
    </recommendedName>
</protein>
<gene>
    <name evidence="1" type="primary">zapC</name>
    <name type="ordered locus">Dd703_1647</name>
</gene>
<sequence>MKLIPDDNWRWYFDADQARLMLDLANGMTFRSRFSATMLTPDAFNPSDFCVEDAALFFTYQEKCLTLNIDAQAKAELVLNALVANRFLKPLMPKSWHFAALGHGEYCPQLGELVWVRLNERLEDACFMVVDTGDKASLCLLAQAELALSGKVMVLGEAIKIMHDRLCPVDEGADHAQSSLHFAHAG</sequence>
<reference key="1">
    <citation type="submission" date="2009-06" db="EMBL/GenBank/DDBJ databases">
        <title>Complete sequence of Dickeya dadantii Ech703.</title>
        <authorList>
            <consortium name="US DOE Joint Genome Institute"/>
            <person name="Lucas S."/>
            <person name="Copeland A."/>
            <person name="Lapidus A."/>
            <person name="Glavina del Rio T."/>
            <person name="Dalin E."/>
            <person name="Tice H."/>
            <person name="Bruce D."/>
            <person name="Goodwin L."/>
            <person name="Pitluck S."/>
            <person name="Chertkov O."/>
            <person name="Brettin T."/>
            <person name="Detter J.C."/>
            <person name="Han C."/>
            <person name="Larimer F."/>
            <person name="Land M."/>
            <person name="Hauser L."/>
            <person name="Kyrpides N."/>
            <person name="Mikhailova N."/>
            <person name="Balakrishnan V."/>
            <person name="Glasner J."/>
            <person name="Perna N.T."/>
        </authorList>
    </citation>
    <scope>NUCLEOTIDE SEQUENCE [LARGE SCALE GENOMIC DNA]</scope>
    <source>
        <strain>Ech703</strain>
    </source>
</reference>
<organism>
    <name type="scientific">Musicola paradisiaca (strain Ech703)</name>
    <name type="common">Dickeya paradisiaca</name>
    <name type="synonym">Dickeya dadantii</name>
    <dbReference type="NCBI Taxonomy" id="579405"/>
    <lineage>
        <taxon>Bacteria</taxon>
        <taxon>Pseudomonadati</taxon>
        <taxon>Pseudomonadota</taxon>
        <taxon>Gammaproteobacteria</taxon>
        <taxon>Enterobacterales</taxon>
        <taxon>Pectobacteriaceae</taxon>
        <taxon>Musicola</taxon>
    </lineage>
</organism>
<evidence type="ECO:0000255" key="1">
    <source>
        <dbReference type="HAMAP-Rule" id="MF_00906"/>
    </source>
</evidence>
<proteinExistence type="inferred from homology"/>
<name>ZAPC_MUSP7</name>
<comment type="function">
    <text evidence="1">Contributes to the efficiency of the cell division process by stabilizing the polymeric form of the cell division protein FtsZ. Acts by promoting interactions between FtsZ protofilaments and suppressing the GTPase activity of FtsZ.</text>
</comment>
<comment type="subunit">
    <text evidence="1">Interacts directly with FtsZ.</text>
</comment>
<comment type="subcellular location">
    <subcellularLocation>
        <location evidence="1">Cytoplasm</location>
    </subcellularLocation>
</comment>
<comment type="similarity">
    <text evidence="1">Belongs to the ZapC family.</text>
</comment>
<accession>C6C3U9</accession>